<organism>
    <name type="scientific">Xenopus laevis</name>
    <name type="common">African clawed frog</name>
    <dbReference type="NCBI Taxonomy" id="8355"/>
    <lineage>
        <taxon>Eukaryota</taxon>
        <taxon>Metazoa</taxon>
        <taxon>Chordata</taxon>
        <taxon>Craniata</taxon>
        <taxon>Vertebrata</taxon>
        <taxon>Euteleostomi</taxon>
        <taxon>Amphibia</taxon>
        <taxon>Batrachia</taxon>
        <taxon>Anura</taxon>
        <taxon>Pipoidea</taxon>
        <taxon>Pipidae</taxon>
        <taxon>Xenopodinae</taxon>
        <taxon>Xenopus</taxon>
        <taxon>Xenopus</taxon>
    </lineage>
</organism>
<reference key="1">
    <citation type="submission" date="2003-01" db="EMBL/GenBank/DDBJ databases">
        <authorList>
            <consortium name="NIH - Xenopus Gene Collection (XGC) project"/>
        </authorList>
    </citation>
    <scope>NUCLEOTIDE SEQUENCE [LARGE SCALE MRNA]</scope>
    <source>
        <tissue>Embryo</tissue>
    </source>
</reference>
<feature type="signal peptide" evidence="2">
    <location>
        <begin position="1"/>
        <end position="17"/>
    </location>
</feature>
<feature type="chain" id="PRO_0000046069" description="Cell adhesion molecule 3">
    <location>
        <begin position="18"/>
        <end position="394"/>
    </location>
</feature>
<feature type="topological domain" description="Extracellular" evidence="2">
    <location>
        <begin position="18"/>
        <end position="326"/>
    </location>
</feature>
<feature type="transmembrane region" description="Helical" evidence="2">
    <location>
        <begin position="327"/>
        <end position="347"/>
    </location>
</feature>
<feature type="topological domain" description="Cytoplasmic" evidence="2">
    <location>
        <begin position="348"/>
        <end position="394"/>
    </location>
</feature>
<feature type="domain" description="Ig-like V-type">
    <location>
        <begin position="22"/>
        <end position="120"/>
    </location>
</feature>
<feature type="domain" description="Ig-like C2-type 1">
    <location>
        <begin position="128"/>
        <end position="223"/>
    </location>
</feature>
<feature type="domain" description="Ig-like C2-type 2">
    <location>
        <begin position="228"/>
        <end position="306"/>
    </location>
</feature>
<feature type="region of interest" description="Disordered" evidence="4">
    <location>
        <begin position="217"/>
        <end position="240"/>
    </location>
</feature>
<feature type="region of interest" description="Disordered" evidence="4">
    <location>
        <begin position="363"/>
        <end position="394"/>
    </location>
</feature>
<feature type="compositionally biased region" description="Basic and acidic residues" evidence="4">
    <location>
        <begin position="230"/>
        <end position="240"/>
    </location>
</feature>
<feature type="disulfide bond" evidence="3">
    <location>
        <begin position="45"/>
        <end position="105"/>
    </location>
</feature>
<feature type="disulfide bond" evidence="3">
    <location>
        <begin position="147"/>
        <end position="204"/>
    </location>
</feature>
<feature type="disulfide bond" evidence="3">
    <location>
        <begin position="249"/>
        <end position="295"/>
    </location>
</feature>
<proteinExistence type="evidence at transcript level"/>
<keyword id="KW-0130">Cell adhesion</keyword>
<keyword id="KW-0965">Cell junction</keyword>
<keyword id="KW-1003">Cell membrane</keyword>
<keyword id="KW-1015">Disulfide bond</keyword>
<keyword id="KW-0393">Immunoglobulin domain</keyword>
<keyword id="KW-0472">Membrane</keyword>
<keyword id="KW-1185">Reference proteome</keyword>
<keyword id="KW-0677">Repeat</keyword>
<keyword id="KW-0732">Signal</keyword>
<keyword id="KW-0812">Transmembrane</keyword>
<keyword id="KW-1133">Transmembrane helix</keyword>
<evidence type="ECO:0000250" key="1">
    <source>
        <dbReference type="UniProtKB" id="Q99N28"/>
    </source>
</evidence>
<evidence type="ECO:0000255" key="2"/>
<evidence type="ECO:0000255" key="3">
    <source>
        <dbReference type="PROSITE-ProRule" id="PRU00114"/>
    </source>
</evidence>
<evidence type="ECO:0000256" key="4">
    <source>
        <dbReference type="SAM" id="MobiDB-lite"/>
    </source>
</evidence>
<evidence type="ECO:0000305" key="5"/>
<sequence length="394" mass="42730">MHHPVILLLCLSSLAGAANLPPEDLSQPVTADVIVPTGGTAILKCTVQEHLESSLQWSNTAQQTLYFGEKRALRDNRIQLVHSSPNELTISISNVVLSDEGEYTCSIFTMPVRTAKAVVTVLGVPQKPQVSGFESAFKENDKAKLRCTTSGSKPAANIKWYKGPEELEGAKTSVLEDGNGKTFTVKSFIEFDVTKDDDGAEITCAVGHESLHDSAKSSSHKIQVQYKPTAKIESRPSMPREGDKLRLQCDAYGNPVPDNYVWERENGEVPLLANIEGNSLVFFNLNKTDSGTYTCKASNTLGTFITHYKLDVNDPSPIPSTSSIDHAVIGGVVAVIAFLLFCLLIVLGRYLIRHKGTYLTHEAKGSDDAPDADTAIINAEGGQGGSDDKKEYFI</sequence>
<name>CADM3_XENLA</name>
<comment type="function">
    <text evidence="1">May be involved in cell-cell adhesion.</text>
</comment>
<comment type="subcellular location">
    <subcellularLocation>
        <location evidence="1">Cell membrane</location>
        <topology evidence="1">Single-pass type I membrane protein</topology>
    </subcellularLocation>
    <subcellularLocation>
        <location evidence="1">Cell junction</location>
    </subcellularLocation>
</comment>
<comment type="similarity">
    <text evidence="5">Belongs to the nectin family.</text>
</comment>
<accession>Q7ZXX1</accession>
<dbReference type="EMBL" id="BC044084">
    <property type="protein sequence ID" value="AAH44084.1"/>
    <property type="molecule type" value="mRNA"/>
</dbReference>
<dbReference type="RefSeq" id="NP_001080468.1">
    <property type="nucleotide sequence ID" value="NM_001086999.1"/>
</dbReference>
<dbReference type="SMR" id="Q7ZXX1"/>
<dbReference type="DNASU" id="380160"/>
<dbReference type="AGR" id="Xenbase:XB-GENE-1012968"/>
<dbReference type="Xenbase" id="XB-GENE-1012968">
    <property type="gene designation" value="cadm3.S"/>
</dbReference>
<dbReference type="Proteomes" id="UP000186698">
    <property type="component" value="Unplaced"/>
</dbReference>
<dbReference type="Bgee" id="380160">
    <property type="expression patterns" value="Expressed in brain and 9 other cell types or tissues"/>
</dbReference>
<dbReference type="GO" id="GO:0070161">
    <property type="term" value="C:anchoring junction"/>
    <property type="evidence" value="ECO:0007669"/>
    <property type="project" value="UniProtKB-SubCell"/>
</dbReference>
<dbReference type="GO" id="GO:0042734">
    <property type="term" value="C:presynaptic membrane"/>
    <property type="evidence" value="ECO:0000318"/>
    <property type="project" value="GO_Central"/>
</dbReference>
<dbReference type="GO" id="GO:0007156">
    <property type="term" value="P:homophilic cell adhesion via plasma membrane adhesion molecules"/>
    <property type="evidence" value="ECO:0000318"/>
    <property type="project" value="GO_Central"/>
</dbReference>
<dbReference type="CDD" id="cd07705">
    <property type="entry name" value="IgI_2_Necl-1"/>
    <property type="match status" value="1"/>
</dbReference>
<dbReference type="CDD" id="cd05882">
    <property type="entry name" value="IgV_1_Necl-1"/>
    <property type="match status" value="1"/>
</dbReference>
<dbReference type="FunFam" id="2.60.40.10:FF:000013">
    <property type="entry name" value="cell adhesion molecule 1 isoform X1"/>
    <property type="match status" value="1"/>
</dbReference>
<dbReference type="Gene3D" id="2.60.40.10">
    <property type="entry name" value="Immunoglobulins"/>
    <property type="match status" value="3"/>
</dbReference>
<dbReference type="InterPro" id="IPR013162">
    <property type="entry name" value="CD80_C2-set"/>
</dbReference>
<dbReference type="InterPro" id="IPR007110">
    <property type="entry name" value="Ig-like_dom"/>
</dbReference>
<dbReference type="InterPro" id="IPR036179">
    <property type="entry name" value="Ig-like_dom_sf"/>
</dbReference>
<dbReference type="InterPro" id="IPR013783">
    <property type="entry name" value="Ig-like_fold"/>
</dbReference>
<dbReference type="InterPro" id="IPR003599">
    <property type="entry name" value="Ig_sub"/>
</dbReference>
<dbReference type="InterPro" id="IPR003598">
    <property type="entry name" value="Ig_sub2"/>
</dbReference>
<dbReference type="InterPro" id="IPR013106">
    <property type="entry name" value="Ig_V-set"/>
</dbReference>
<dbReference type="InterPro" id="IPR003585">
    <property type="entry name" value="Neurexin-like"/>
</dbReference>
<dbReference type="PANTHER" id="PTHR45889:SF5">
    <property type="entry name" value="CELL ADHESION MOLECULE 3"/>
    <property type="match status" value="1"/>
</dbReference>
<dbReference type="PANTHER" id="PTHR45889">
    <property type="entry name" value="IG-LIKE DOMAIN-CONTAINING PROTEIN"/>
    <property type="match status" value="1"/>
</dbReference>
<dbReference type="Pfam" id="PF08205">
    <property type="entry name" value="C2-set_2"/>
    <property type="match status" value="1"/>
</dbReference>
<dbReference type="Pfam" id="PF13927">
    <property type="entry name" value="Ig_3"/>
    <property type="match status" value="1"/>
</dbReference>
<dbReference type="Pfam" id="PF07686">
    <property type="entry name" value="V-set"/>
    <property type="match status" value="1"/>
</dbReference>
<dbReference type="PIRSF" id="PIRSF000615">
    <property type="entry name" value="TyrPK_CSF1-R"/>
    <property type="match status" value="1"/>
</dbReference>
<dbReference type="SMART" id="SM00294">
    <property type="entry name" value="4.1m"/>
    <property type="match status" value="1"/>
</dbReference>
<dbReference type="SMART" id="SM00409">
    <property type="entry name" value="IG"/>
    <property type="match status" value="3"/>
</dbReference>
<dbReference type="SMART" id="SM00408">
    <property type="entry name" value="IGc2"/>
    <property type="match status" value="3"/>
</dbReference>
<dbReference type="SUPFAM" id="SSF48726">
    <property type="entry name" value="Immunoglobulin"/>
    <property type="match status" value="3"/>
</dbReference>
<dbReference type="PROSITE" id="PS50835">
    <property type="entry name" value="IG_LIKE"/>
    <property type="match status" value="3"/>
</dbReference>
<protein>
    <recommendedName>
        <fullName>Cell adhesion molecule 3</fullName>
    </recommendedName>
    <alternativeName>
        <fullName>Immunoglobulin superfamily member 4B</fullName>
        <shortName>IgSF4B</shortName>
    </alternativeName>
</protein>
<gene>
    <name type="primary">cadm3</name>
    <name type="synonym">igsf4b</name>
</gene>